<gene>
    <name evidence="1" type="primary">tsaD</name>
    <name type="synonym">gcp</name>
</gene>
<accession>Q30BK9</accession>
<proteinExistence type="inferred from homology"/>
<dbReference type="EC" id="2.3.1.234" evidence="1"/>
<dbReference type="EMBL" id="DQ213023">
    <property type="protein sequence ID" value="ABB00580.1"/>
    <property type="molecule type" value="Genomic_DNA"/>
</dbReference>
<dbReference type="RefSeq" id="WP_002244668.1">
    <property type="nucleotide sequence ID" value="NZ_UGRV01000001.1"/>
</dbReference>
<dbReference type="SMR" id="Q30BK9"/>
<dbReference type="PATRIC" id="fig|487.518.peg.968"/>
<dbReference type="GO" id="GO:0005737">
    <property type="term" value="C:cytoplasm"/>
    <property type="evidence" value="ECO:0007669"/>
    <property type="project" value="UniProtKB-SubCell"/>
</dbReference>
<dbReference type="GO" id="GO:0005506">
    <property type="term" value="F:iron ion binding"/>
    <property type="evidence" value="ECO:0007669"/>
    <property type="project" value="UniProtKB-UniRule"/>
</dbReference>
<dbReference type="GO" id="GO:0061711">
    <property type="term" value="F:N(6)-L-threonylcarbamoyladenine synthase activity"/>
    <property type="evidence" value="ECO:0007669"/>
    <property type="project" value="UniProtKB-EC"/>
</dbReference>
<dbReference type="GO" id="GO:0002949">
    <property type="term" value="P:tRNA threonylcarbamoyladenosine modification"/>
    <property type="evidence" value="ECO:0007669"/>
    <property type="project" value="UniProtKB-UniRule"/>
</dbReference>
<dbReference type="CDD" id="cd24133">
    <property type="entry name" value="ASKHA_NBD_TsaD_bac"/>
    <property type="match status" value="1"/>
</dbReference>
<dbReference type="FunFam" id="3.30.420.40:FF:000040">
    <property type="entry name" value="tRNA N6-adenosine threonylcarbamoyltransferase"/>
    <property type="match status" value="1"/>
</dbReference>
<dbReference type="Gene3D" id="3.30.420.40">
    <property type="match status" value="2"/>
</dbReference>
<dbReference type="HAMAP" id="MF_01445">
    <property type="entry name" value="TsaD"/>
    <property type="match status" value="1"/>
</dbReference>
<dbReference type="InterPro" id="IPR043129">
    <property type="entry name" value="ATPase_NBD"/>
</dbReference>
<dbReference type="InterPro" id="IPR000905">
    <property type="entry name" value="Gcp-like_dom"/>
</dbReference>
<dbReference type="InterPro" id="IPR017861">
    <property type="entry name" value="KAE1/TsaD"/>
</dbReference>
<dbReference type="InterPro" id="IPR022450">
    <property type="entry name" value="TsaD"/>
</dbReference>
<dbReference type="NCBIfam" id="TIGR00329">
    <property type="entry name" value="gcp_kae1"/>
    <property type="match status" value="1"/>
</dbReference>
<dbReference type="NCBIfam" id="TIGR03723">
    <property type="entry name" value="T6A_TsaD_YgjD"/>
    <property type="match status" value="1"/>
</dbReference>
<dbReference type="PANTHER" id="PTHR11735">
    <property type="entry name" value="TRNA N6-ADENOSINE THREONYLCARBAMOYLTRANSFERASE"/>
    <property type="match status" value="1"/>
</dbReference>
<dbReference type="PANTHER" id="PTHR11735:SF6">
    <property type="entry name" value="TRNA N6-ADENOSINE THREONYLCARBAMOYLTRANSFERASE, MITOCHONDRIAL"/>
    <property type="match status" value="1"/>
</dbReference>
<dbReference type="Pfam" id="PF00814">
    <property type="entry name" value="TsaD"/>
    <property type="match status" value="1"/>
</dbReference>
<dbReference type="PRINTS" id="PR00789">
    <property type="entry name" value="OSIALOPTASE"/>
</dbReference>
<dbReference type="SUPFAM" id="SSF53067">
    <property type="entry name" value="Actin-like ATPase domain"/>
    <property type="match status" value="2"/>
</dbReference>
<reference key="1">
    <citation type="submission" date="2005-09" db="EMBL/GenBank/DDBJ databases">
        <title>The O-sialoglycoprotein endopeptidase of Neisseria meningitidis: expression, regulation, and a role in adherence to epithelial cells.</title>
        <authorList>
            <person name="Higashi D.L."/>
            <person name="Larson J.A."/>
            <person name="Lo R.Y.C."/>
            <person name="So M."/>
        </authorList>
    </citation>
    <scope>NUCLEOTIDE SEQUENCE [GENOMIC DNA]</scope>
    <source>
        <strain>8013.6</strain>
    </source>
</reference>
<organism>
    <name type="scientific">Neisseria meningitidis</name>
    <dbReference type="NCBI Taxonomy" id="487"/>
    <lineage>
        <taxon>Bacteria</taxon>
        <taxon>Pseudomonadati</taxon>
        <taxon>Pseudomonadota</taxon>
        <taxon>Betaproteobacteria</taxon>
        <taxon>Neisseriales</taxon>
        <taxon>Neisseriaceae</taxon>
        <taxon>Neisseria</taxon>
    </lineage>
</organism>
<comment type="function">
    <text evidence="1">Required for the formation of a threonylcarbamoyl group on adenosine at position 37 (t(6)A37) in tRNAs that read codons beginning with adenine. Is involved in the transfer of the threonylcarbamoyl moiety of threonylcarbamoyl-AMP (TC-AMP) to the N6 group of A37, together with TsaE and TsaB. TsaD likely plays a direct catalytic role in this reaction.</text>
</comment>
<comment type="catalytic activity">
    <reaction evidence="1">
        <text>L-threonylcarbamoyladenylate + adenosine(37) in tRNA = N(6)-L-threonylcarbamoyladenosine(37) in tRNA + AMP + H(+)</text>
        <dbReference type="Rhea" id="RHEA:37059"/>
        <dbReference type="Rhea" id="RHEA-COMP:10162"/>
        <dbReference type="Rhea" id="RHEA-COMP:10163"/>
        <dbReference type="ChEBI" id="CHEBI:15378"/>
        <dbReference type="ChEBI" id="CHEBI:73682"/>
        <dbReference type="ChEBI" id="CHEBI:74411"/>
        <dbReference type="ChEBI" id="CHEBI:74418"/>
        <dbReference type="ChEBI" id="CHEBI:456215"/>
        <dbReference type="EC" id="2.3.1.234"/>
    </reaction>
</comment>
<comment type="cofactor">
    <cofactor evidence="1">
        <name>Fe(2+)</name>
        <dbReference type="ChEBI" id="CHEBI:29033"/>
    </cofactor>
    <text evidence="1">Binds 1 Fe(2+) ion per subunit.</text>
</comment>
<comment type="subcellular location">
    <subcellularLocation>
        <location evidence="1">Cytoplasm</location>
    </subcellularLocation>
</comment>
<comment type="similarity">
    <text evidence="1">Belongs to the KAE1 / TsaD family.</text>
</comment>
<keyword id="KW-0012">Acyltransferase</keyword>
<keyword id="KW-0963">Cytoplasm</keyword>
<keyword id="KW-0408">Iron</keyword>
<keyword id="KW-0479">Metal-binding</keyword>
<keyword id="KW-0808">Transferase</keyword>
<keyword id="KW-0819">tRNA processing</keyword>
<name>TSAD_NEIME</name>
<feature type="chain" id="PRO_0000303448" description="tRNA N6-adenosine threonylcarbamoyltransferase">
    <location>
        <begin position="1"/>
        <end position="354"/>
    </location>
</feature>
<feature type="binding site" evidence="1">
    <location>
        <position position="111"/>
    </location>
    <ligand>
        <name>Fe cation</name>
        <dbReference type="ChEBI" id="CHEBI:24875"/>
    </ligand>
</feature>
<feature type="binding site" evidence="1">
    <location>
        <position position="115"/>
    </location>
    <ligand>
        <name>Fe cation</name>
        <dbReference type="ChEBI" id="CHEBI:24875"/>
    </ligand>
</feature>
<feature type="binding site" evidence="1">
    <location>
        <begin position="134"/>
        <end position="138"/>
    </location>
    <ligand>
        <name>substrate</name>
    </ligand>
</feature>
<feature type="binding site" evidence="1">
    <location>
        <position position="167"/>
    </location>
    <ligand>
        <name>substrate</name>
    </ligand>
</feature>
<feature type="binding site" evidence="1">
    <location>
        <position position="180"/>
    </location>
    <ligand>
        <name>substrate</name>
    </ligand>
</feature>
<feature type="binding site" evidence="1">
    <location>
        <position position="279"/>
    </location>
    <ligand>
        <name>substrate</name>
    </ligand>
</feature>
<feature type="binding site" evidence="1">
    <location>
        <position position="319"/>
    </location>
    <ligand>
        <name>Fe cation</name>
        <dbReference type="ChEBI" id="CHEBI:24875"/>
    </ligand>
</feature>
<protein>
    <recommendedName>
        <fullName evidence="1">tRNA N6-adenosine threonylcarbamoyltransferase</fullName>
        <ecNumber evidence="1">2.3.1.234</ecNumber>
    </recommendedName>
    <alternativeName>
        <fullName evidence="1">N6-L-threonylcarbamoyladenine synthase</fullName>
        <shortName evidence="1">t(6)A synthase</shortName>
    </alternativeName>
    <alternativeName>
        <fullName evidence="1">t(6)A37 threonylcarbamoyladenosine biosynthesis protein TsaD</fullName>
    </alternativeName>
    <alternativeName>
        <fullName evidence="1">tRNA threonylcarbamoyladenosine biosynthesis protein TsaD</fullName>
    </alternativeName>
</protein>
<sequence length="354" mass="37560">MLVLGIESSCDETGVALYDTERGLRAHCLHTQMAMHAEYGGVVPELASRDHIRRLVPLTEGCLAQAGASYGDIDAVAFTQGPGLGGALLAGSSYANALALALDKPVIPVHHLEGHLLSPLLAEEKPDFPFVALLVSGGHTQIMAVRGIGDYALLGESVDDAAGEAFDKTAKLLGLPYPGGAKLSELAESGRPEAFVFPRPMIHSDDLQMSFSGLKTAVLTAVEKVRAENGADDIPEQTRNDICRAFQDAVVDVLAAKVKKALLQTGFRTVVVAGGVGANRKLRETFGNMTVQIPTPKGKPKHPSEKVSVFFPPMAYCTDNGAMIAFAGAMHLGKGREVGAFNVRPRWPLSEIVR</sequence>
<evidence type="ECO:0000255" key="1">
    <source>
        <dbReference type="HAMAP-Rule" id="MF_01445"/>
    </source>
</evidence>